<gene>
    <name evidence="1" type="primary">gatC</name>
    <name type="ordered locus">Mmc1_0683</name>
</gene>
<name>GATC_MAGMM</name>
<reference key="1">
    <citation type="journal article" date="2009" name="Appl. Environ. Microbiol.">
        <title>Complete genome sequence of the chemolithoautotrophic marine magnetotactic coccus strain MC-1.</title>
        <authorList>
            <person name="Schubbe S."/>
            <person name="Williams T.J."/>
            <person name="Xie G."/>
            <person name="Kiss H.E."/>
            <person name="Brettin T.S."/>
            <person name="Martinez D."/>
            <person name="Ross C.A."/>
            <person name="Schuler D."/>
            <person name="Cox B.L."/>
            <person name="Nealson K.H."/>
            <person name="Bazylinski D.A."/>
        </authorList>
    </citation>
    <scope>NUCLEOTIDE SEQUENCE [LARGE SCALE GENOMIC DNA]</scope>
    <source>
        <strain>ATCC BAA-1437 / JCM 17883 / MC-1</strain>
    </source>
</reference>
<organism>
    <name type="scientific">Magnetococcus marinus (strain ATCC BAA-1437 / JCM 17883 / MC-1)</name>
    <dbReference type="NCBI Taxonomy" id="156889"/>
    <lineage>
        <taxon>Bacteria</taxon>
        <taxon>Pseudomonadati</taxon>
        <taxon>Pseudomonadota</taxon>
        <taxon>Alphaproteobacteria</taxon>
        <taxon>Magnetococcales</taxon>
        <taxon>Magnetococcaceae</taxon>
        <taxon>Magnetococcus</taxon>
    </lineage>
</organism>
<feature type="chain" id="PRO_1000016141" description="Aspartyl/glutamyl-tRNA(Asn/Gln) amidotransferase subunit C">
    <location>
        <begin position="1"/>
        <end position="95"/>
    </location>
</feature>
<sequence length="95" mass="10602">MSVTKETVQHVANLARLQFNEEETERFSGQISRIVDLMDALSKLPTEGVKPMSHAVDMAIPQRDDVVTNGNQRDTMLANAPDAEKGHFRVPKVIE</sequence>
<comment type="function">
    <text evidence="1">Allows the formation of correctly charged Asn-tRNA(Asn) or Gln-tRNA(Gln) through the transamidation of misacylated Asp-tRNA(Asn) or Glu-tRNA(Gln) in organisms which lack either or both of asparaginyl-tRNA or glutaminyl-tRNA synthetases. The reaction takes place in the presence of glutamine and ATP through an activated phospho-Asp-tRNA(Asn) or phospho-Glu-tRNA(Gln).</text>
</comment>
<comment type="catalytic activity">
    <reaction evidence="1">
        <text>L-glutamyl-tRNA(Gln) + L-glutamine + ATP + H2O = L-glutaminyl-tRNA(Gln) + L-glutamate + ADP + phosphate + H(+)</text>
        <dbReference type="Rhea" id="RHEA:17521"/>
        <dbReference type="Rhea" id="RHEA-COMP:9681"/>
        <dbReference type="Rhea" id="RHEA-COMP:9684"/>
        <dbReference type="ChEBI" id="CHEBI:15377"/>
        <dbReference type="ChEBI" id="CHEBI:15378"/>
        <dbReference type="ChEBI" id="CHEBI:29985"/>
        <dbReference type="ChEBI" id="CHEBI:30616"/>
        <dbReference type="ChEBI" id="CHEBI:43474"/>
        <dbReference type="ChEBI" id="CHEBI:58359"/>
        <dbReference type="ChEBI" id="CHEBI:78520"/>
        <dbReference type="ChEBI" id="CHEBI:78521"/>
        <dbReference type="ChEBI" id="CHEBI:456216"/>
    </reaction>
</comment>
<comment type="catalytic activity">
    <reaction evidence="1">
        <text>L-aspartyl-tRNA(Asn) + L-glutamine + ATP + H2O = L-asparaginyl-tRNA(Asn) + L-glutamate + ADP + phosphate + 2 H(+)</text>
        <dbReference type="Rhea" id="RHEA:14513"/>
        <dbReference type="Rhea" id="RHEA-COMP:9674"/>
        <dbReference type="Rhea" id="RHEA-COMP:9677"/>
        <dbReference type="ChEBI" id="CHEBI:15377"/>
        <dbReference type="ChEBI" id="CHEBI:15378"/>
        <dbReference type="ChEBI" id="CHEBI:29985"/>
        <dbReference type="ChEBI" id="CHEBI:30616"/>
        <dbReference type="ChEBI" id="CHEBI:43474"/>
        <dbReference type="ChEBI" id="CHEBI:58359"/>
        <dbReference type="ChEBI" id="CHEBI:78515"/>
        <dbReference type="ChEBI" id="CHEBI:78516"/>
        <dbReference type="ChEBI" id="CHEBI:456216"/>
    </reaction>
</comment>
<comment type="subunit">
    <text evidence="1">Heterotrimer of A, B and C subunits.</text>
</comment>
<comment type="similarity">
    <text evidence="1">Belongs to the GatC family.</text>
</comment>
<protein>
    <recommendedName>
        <fullName evidence="1">Aspartyl/glutamyl-tRNA(Asn/Gln) amidotransferase subunit C</fullName>
        <shortName evidence="1">Asp/Glu-ADT subunit C</shortName>
        <ecNumber evidence="1">6.3.5.-</ecNumber>
    </recommendedName>
</protein>
<keyword id="KW-0067">ATP-binding</keyword>
<keyword id="KW-0436">Ligase</keyword>
<keyword id="KW-0547">Nucleotide-binding</keyword>
<keyword id="KW-0648">Protein biosynthesis</keyword>
<keyword id="KW-1185">Reference proteome</keyword>
<proteinExistence type="inferred from homology"/>
<dbReference type="EC" id="6.3.5.-" evidence="1"/>
<dbReference type="EMBL" id="CP000471">
    <property type="protein sequence ID" value="ABK43204.1"/>
    <property type="molecule type" value="Genomic_DNA"/>
</dbReference>
<dbReference type="RefSeq" id="WP_011712364.1">
    <property type="nucleotide sequence ID" value="NC_008576.1"/>
</dbReference>
<dbReference type="SMR" id="A0L5G1"/>
<dbReference type="STRING" id="156889.Mmc1_0683"/>
<dbReference type="KEGG" id="mgm:Mmc1_0683"/>
<dbReference type="eggNOG" id="COG0721">
    <property type="taxonomic scope" value="Bacteria"/>
</dbReference>
<dbReference type="HOGENOM" id="CLU_105899_6_1_5"/>
<dbReference type="OrthoDB" id="9794326at2"/>
<dbReference type="Proteomes" id="UP000002586">
    <property type="component" value="Chromosome"/>
</dbReference>
<dbReference type="GO" id="GO:0050566">
    <property type="term" value="F:asparaginyl-tRNA synthase (glutamine-hydrolyzing) activity"/>
    <property type="evidence" value="ECO:0007669"/>
    <property type="project" value="RHEA"/>
</dbReference>
<dbReference type="GO" id="GO:0005524">
    <property type="term" value="F:ATP binding"/>
    <property type="evidence" value="ECO:0007669"/>
    <property type="project" value="UniProtKB-KW"/>
</dbReference>
<dbReference type="GO" id="GO:0050567">
    <property type="term" value="F:glutaminyl-tRNA synthase (glutamine-hydrolyzing) activity"/>
    <property type="evidence" value="ECO:0007669"/>
    <property type="project" value="UniProtKB-UniRule"/>
</dbReference>
<dbReference type="GO" id="GO:0070681">
    <property type="term" value="P:glutaminyl-tRNAGln biosynthesis via transamidation"/>
    <property type="evidence" value="ECO:0007669"/>
    <property type="project" value="TreeGrafter"/>
</dbReference>
<dbReference type="GO" id="GO:0006450">
    <property type="term" value="P:regulation of translational fidelity"/>
    <property type="evidence" value="ECO:0007669"/>
    <property type="project" value="InterPro"/>
</dbReference>
<dbReference type="GO" id="GO:0006412">
    <property type="term" value="P:translation"/>
    <property type="evidence" value="ECO:0007669"/>
    <property type="project" value="UniProtKB-UniRule"/>
</dbReference>
<dbReference type="Gene3D" id="1.10.20.60">
    <property type="entry name" value="Glu-tRNAGln amidotransferase C subunit, N-terminal domain"/>
    <property type="match status" value="1"/>
</dbReference>
<dbReference type="HAMAP" id="MF_00122">
    <property type="entry name" value="GatC"/>
    <property type="match status" value="1"/>
</dbReference>
<dbReference type="InterPro" id="IPR036113">
    <property type="entry name" value="Asp/Glu-ADT_sf_sub_c"/>
</dbReference>
<dbReference type="InterPro" id="IPR003837">
    <property type="entry name" value="GatC"/>
</dbReference>
<dbReference type="NCBIfam" id="TIGR00135">
    <property type="entry name" value="gatC"/>
    <property type="match status" value="1"/>
</dbReference>
<dbReference type="PANTHER" id="PTHR15004">
    <property type="entry name" value="GLUTAMYL-TRNA(GLN) AMIDOTRANSFERASE SUBUNIT C, MITOCHONDRIAL"/>
    <property type="match status" value="1"/>
</dbReference>
<dbReference type="PANTHER" id="PTHR15004:SF0">
    <property type="entry name" value="GLUTAMYL-TRNA(GLN) AMIDOTRANSFERASE SUBUNIT C, MITOCHONDRIAL"/>
    <property type="match status" value="1"/>
</dbReference>
<dbReference type="Pfam" id="PF02686">
    <property type="entry name" value="GatC"/>
    <property type="match status" value="1"/>
</dbReference>
<dbReference type="SUPFAM" id="SSF141000">
    <property type="entry name" value="Glu-tRNAGln amidotransferase C subunit"/>
    <property type="match status" value="1"/>
</dbReference>
<accession>A0L5G1</accession>
<evidence type="ECO:0000255" key="1">
    <source>
        <dbReference type="HAMAP-Rule" id="MF_00122"/>
    </source>
</evidence>